<proteinExistence type="inferred from homology"/>
<reference key="1">
    <citation type="submission" date="2005-08" db="EMBL/GenBank/DDBJ databases">
        <title>Complete sequence of Synechococcus sp. CC9902.</title>
        <authorList>
            <person name="Copeland A."/>
            <person name="Lucas S."/>
            <person name="Lapidus A."/>
            <person name="Barry K."/>
            <person name="Detter J.C."/>
            <person name="Glavina T."/>
            <person name="Hammon N."/>
            <person name="Israni S."/>
            <person name="Pitluck S."/>
            <person name="Martinez M."/>
            <person name="Schmutz J."/>
            <person name="Larimer F."/>
            <person name="Land M."/>
            <person name="Kyrpides N."/>
            <person name="Ivanova N."/>
            <person name="Richardson P."/>
        </authorList>
    </citation>
    <scope>NUCLEOTIDE SEQUENCE [LARGE SCALE GENOMIC DNA]</scope>
    <source>
        <strain>CC9902</strain>
    </source>
</reference>
<sequence length="199" mass="22148">MTFGDWPPQRRIGLTGGIASGKSSVAALLEKRGCPVLDADVYAREALATDTSASKAVVARYGKRVQKDGTSDIDRAELAAIVFNDPNERSWLEQLVHPIVQRRFDDALRSLPDAPIVILMIPLLFEAGLEKWCSEIWVVRCTALQQRERLMARNNCTEAEATQRIAAQWPIDIKVQRADSVINNSGRIDDLHDQLDALL</sequence>
<dbReference type="EC" id="2.7.1.24" evidence="1"/>
<dbReference type="EMBL" id="CP000097">
    <property type="protein sequence ID" value="ABB27125.1"/>
    <property type="molecule type" value="Genomic_DNA"/>
</dbReference>
<dbReference type="RefSeq" id="WP_011360906.1">
    <property type="nucleotide sequence ID" value="NC_007513.1"/>
</dbReference>
<dbReference type="SMR" id="Q3AVV9"/>
<dbReference type="STRING" id="316279.Syncc9902_2167"/>
<dbReference type="KEGG" id="sye:Syncc9902_2167"/>
<dbReference type="eggNOG" id="COG0237">
    <property type="taxonomic scope" value="Bacteria"/>
</dbReference>
<dbReference type="HOGENOM" id="CLU_057180_0_0_3"/>
<dbReference type="OrthoDB" id="9812943at2"/>
<dbReference type="UniPathway" id="UPA00241">
    <property type="reaction ID" value="UER00356"/>
</dbReference>
<dbReference type="Proteomes" id="UP000002712">
    <property type="component" value="Chromosome"/>
</dbReference>
<dbReference type="GO" id="GO:0005737">
    <property type="term" value="C:cytoplasm"/>
    <property type="evidence" value="ECO:0007669"/>
    <property type="project" value="UniProtKB-SubCell"/>
</dbReference>
<dbReference type="GO" id="GO:0005524">
    <property type="term" value="F:ATP binding"/>
    <property type="evidence" value="ECO:0007669"/>
    <property type="project" value="UniProtKB-UniRule"/>
</dbReference>
<dbReference type="GO" id="GO:0004140">
    <property type="term" value="F:dephospho-CoA kinase activity"/>
    <property type="evidence" value="ECO:0007669"/>
    <property type="project" value="UniProtKB-UniRule"/>
</dbReference>
<dbReference type="GO" id="GO:0015937">
    <property type="term" value="P:coenzyme A biosynthetic process"/>
    <property type="evidence" value="ECO:0007669"/>
    <property type="project" value="UniProtKB-UniRule"/>
</dbReference>
<dbReference type="CDD" id="cd02022">
    <property type="entry name" value="DPCK"/>
    <property type="match status" value="1"/>
</dbReference>
<dbReference type="Gene3D" id="3.40.50.300">
    <property type="entry name" value="P-loop containing nucleotide triphosphate hydrolases"/>
    <property type="match status" value="1"/>
</dbReference>
<dbReference type="HAMAP" id="MF_00376">
    <property type="entry name" value="Dephospho_CoA_kinase"/>
    <property type="match status" value="1"/>
</dbReference>
<dbReference type="InterPro" id="IPR001977">
    <property type="entry name" value="Depp_CoAkinase"/>
</dbReference>
<dbReference type="InterPro" id="IPR027417">
    <property type="entry name" value="P-loop_NTPase"/>
</dbReference>
<dbReference type="NCBIfam" id="TIGR00152">
    <property type="entry name" value="dephospho-CoA kinase"/>
    <property type="match status" value="1"/>
</dbReference>
<dbReference type="PANTHER" id="PTHR10695:SF46">
    <property type="entry name" value="BIFUNCTIONAL COENZYME A SYNTHASE-RELATED"/>
    <property type="match status" value="1"/>
</dbReference>
<dbReference type="PANTHER" id="PTHR10695">
    <property type="entry name" value="DEPHOSPHO-COA KINASE-RELATED"/>
    <property type="match status" value="1"/>
</dbReference>
<dbReference type="Pfam" id="PF01121">
    <property type="entry name" value="CoaE"/>
    <property type="match status" value="1"/>
</dbReference>
<dbReference type="SUPFAM" id="SSF52540">
    <property type="entry name" value="P-loop containing nucleoside triphosphate hydrolases"/>
    <property type="match status" value="1"/>
</dbReference>
<dbReference type="PROSITE" id="PS51219">
    <property type="entry name" value="DPCK"/>
    <property type="match status" value="1"/>
</dbReference>
<gene>
    <name evidence="1" type="primary">coaE</name>
    <name type="ordered locus">Syncc9902_2167</name>
</gene>
<feature type="chain" id="PRO_0000243353" description="Dephospho-CoA kinase">
    <location>
        <begin position="1"/>
        <end position="199"/>
    </location>
</feature>
<feature type="domain" description="DPCK" evidence="1">
    <location>
        <begin position="11"/>
        <end position="199"/>
    </location>
</feature>
<feature type="binding site" evidence="1">
    <location>
        <begin position="19"/>
        <end position="24"/>
    </location>
    <ligand>
        <name>ATP</name>
        <dbReference type="ChEBI" id="CHEBI:30616"/>
    </ligand>
</feature>
<name>COAE_SYNS9</name>
<evidence type="ECO:0000255" key="1">
    <source>
        <dbReference type="HAMAP-Rule" id="MF_00376"/>
    </source>
</evidence>
<accession>Q3AVV9</accession>
<comment type="function">
    <text evidence="1">Catalyzes the phosphorylation of the 3'-hydroxyl group of dephosphocoenzyme A to form coenzyme A.</text>
</comment>
<comment type="catalytic activity">
    <reaction evidence="1">
        <text>3'-dephospho-CoA + ATP = ADP + CoA + H(+)</text>
        <dbReference type="Rhea" id="RHEA:18245"/>
        <dbReference type="ChEBI" id="CHEBI:15378"/>
        <dbReference type="ChEBI" id="CHEBI:30616"/>
        <dbReference type="ChEBI" id="CHEBI:57287"/>
        <dbReference type="ChEBI" id="CHEBI:57328"/>
        <dbReference type="ChEBI" id="CHEBI:456216"/>
        <dbReference type="EC" id="2.7.1.24"/>
    </reaction>
</comment>
<comment type="pathway">
    <text evidence="1">Cofactor biosynthesis; coenzyme A biosynthesis; CoA from (R)-pantothenate: step 5/5.</text>
</comment>
<comment type="subcellular location">
    <subcellularLocation>
        <location evidence="1">Cytoplasm</location>
    </subcellularLocation>
</comment>
<comment type="similarity">
    <text evidence="1">Belongs to the CoaE family.</text>
</comment>
<keyword id="KW-0067">ATP-binding</keyword>
<keyword id="KW-0173">Coenzyme A biosynthesis</keyword>
<keyword id="KW-0963">Cytoplasm</keyword>
<keyword id="KW-0418">Kinase</keyword>
<keyword id="KW-0547">Nucleotide-binding</keyword>
<keyword id="KW-1185">Reference proteome</keyword>
<keyword id="KW-0808">Transferase</keyword>
<protein>
    <recommendedName>
        <fullName evidence="1">Dephospho-CoA kinase</fullName>
        <ecNumber evidence="1">2.7.1.24</ecNumber>
    </recommendedName>
    <alternativeName>
        <fullName evidence="1">Dephosphocoenzyme A kinase</fullName>
    </alternativeName>
</protein>
<organism>
    <name type="scientific">Synechococcus sp. (strain CC9902)</name>
    <dbReference type="NCBI Taxonomy" id="316279"/>
    <lineage>
        <taxon>Bacteria</taxon>
        <taxon>Bacillati</taxon>
        <taxon>Cyanobacteriota</taxon>
        <taxon>Cyanophyceae</taxon>
        <taxon>Synechococcales</taxon>
        <taxon>Synechococcaceae</taxon>
        <taxon>Synechococcus</taxon>
    </lineage>
</organism>